<keyword id="KW-0067">ATP-binding</keyword>
<keyword id="KW-0106">Calcium</keyword>
<keyword id="KW-0963">Cytoplasm</keyword>
<keyword id="KW-0418">Kinase</keyword>
<keyword id="KW-0449">Lipoprotein</keyword>
<keyword id="KW-0479">Metal-binding</keyword>
<keyword id="KW-0519">Myristate</keyword>
<keyword id="KW-0547">Nucleotide-binding</keyword>
<keyword id="KW-0539">Nucleus</keyword>
<keyword id="KW-0597">Phosphoprotein</keyword>
<keyword id="KW-1185">Reference proteome</keyword>
<keyword id="KW-0677">Repeat</keyword>
<keyword id="KW-0723">Serine/threonine-protein kinase</keyword>
<keyword id="KW-0808">Transferase</keyword>
<proteinExistence type="evidence at protein level"/>
<feature type="initiator methionine" description="Removed" evidence="4">
    <location>
        <position position="1"/>
    </location>
</feature>
<feature type="chain" id="PRO_0000363330" description="Calcium-dependent protein kinase 3">
    <location>
        <begin position="2"/>
        <end position="529"/>
    </location>
</feature>
<feature type="domain" description="Protein kinase" evidence="5">
    <location>
        <begin position="78"/>
        <end position="336"/>
    </location>
</feature>
<feature type="domain" description="EF-hand 1" evidence="6">
    <location>
        <begin position="379"/>
        <end position="414"/>
    </location>
</feature>
<feature type="domain" description="EF-hand 2" evidence="6">
    <location>
        <begin position="415"/>
        <end position="450"/>
    </location>
</feature>
<feature type="domain" description="EF-hand 3" evidence="6">
    <location>
        <begin position="451"/>
        <end position="485"/>
    </location>
</feature>
<feature type="domain" description="EF-hand 4" evidence="6">
    <location>
        <begin position="486"/>
        <end position="521"/>
    </location>
</feature>
<feature type="region of interest" description="Disordered" evidence="8">
    <location>
        <begin position="1"/>
        <end position="73"/>
    </location>
</feature>
<feature type="region of interest" description="Autoinhibitory domain" evidence="2">
    <location>
        <begin position="342"/>
        <end position="372"/>
    </location>
</feature>
<feature type="compositionally biased region" description="Gly residues" evidence="8">
    <location>
        <begin position="39"/>
        <end position="53"/>
    </location>
</feature>
<feature type="active site" description="Proton acceptor" evidence="5 7">
    <location>
        <position position="202"/>
    </location>
</feature>
<feature type="binding site" evidence="5">
    <location>
        <begin position="84"/>
        <end position="92"/>
    </location>
    <ligand>
        <name>ATP</name>
        <dbReference type="ChEBI" id="CHEBI:30616"/>
    </ligand>
</feature>
<feature type="binding site" evidence="5">
    <location>
        <position position="107"/>
    </location>
    <ligand>
        <name>ATP</name>
        <dbReference type="ChEBI" id="CHEBI:30616"/>
    </ligand>
</feature>
<feature type="binding site" evidence="6">
    <location>
        <position position="392"/>
    </location>
    <ligand>
        <name>Ca(2+)</name>
        <dbReference type="ChEBI" id="CHEBI:29108"/>
        <label>1</label>
    </ligand>
</feature>
<feature type="binding site" evidence="6">
    <location>
        <position position="394"/>
    </location>
    <ligand>
        <name>Ca(2+)</name>
        <dbReference type="ChEBI" id="CHEBI:29108"/>
        <label>1</label>
    </ligand>
</feature>
<feature type="binding site" evidence="6">
    <location>
        <position position="396"/>
    </location>
    <ligand>
        <name>Ca(2+)</name>
        <dbReference type="ChEBI" id="CHEBI:29108"/>
        <label>1</label>
    </ligand>
</feature>
<feature type="binding site" evidence="6">
    <location>
        <position position="403"/>
    </location>
    <ligand>
        <name>Ca(2+)</name>
        <dbReference type="ChEBI" id="CHEBI:29108"/>
        <label>1</label>
    </ligand>
</feature>
<feature type="binding site" evidence="6">
    <location>
        <position position="428"/>
    </location>
    <ligand>
        <name>Ca(2+)</name>
        <dbReference type="ChEBI" id="CHEBI:29108"/>
        <label>2</label>
    </ligand>
</feature>
<feature type="binding site" evidence="6">
    <location>
        <position position="430"/>
    </location>
    <ligand>
        <name>Ca(2+)</name>
        <dbReference type="ChEBI" id="CHEBI:29108"/>
        <label>2</label>
    </ligand>
</feature>
<feature type="binding site" evidence="6">
    <location>
        <position position="432"/>
    </location>
    <ligand>
        <name>Ca(2+)</name>
        <dbReference type="ChEBI" id="CHEBI:29108"/>
        <label>2</label>
    </ligand>
</feature>
<feature type="binding site" evidence="6">
    <location>
        <position position="434"/>
    </location>
    <ligand>
        <name>Ca(2+)</name>
        <dbReference type="ChEBI" id="CHEBI:29108"/>
        <label>2</label>
    </ligand>
</feature>
<feature type="binding site" evidence="6">
    <location>
        <position position="439"/>
    </location>
    <ligand>
        <name>Ca(2+)</name>
        <dbReference type="ChEBI" id="CHEBI:29108"/>
        <label>2</label>
    </ligand>
</feature>
<feature type="binding site" evidence="6">
    <location>
        <position position="464"/>
    </location>
    <ligand>
        <name>Ca(2+)</name>
        <dbReference type="ChEBI" id="CHEBI:29108"/>
        <label>3</label>
    </ligand>
</feature>
<feature type="binding site" evidence="6">
    <location>
        <position position="466"/>
    </location>
    <ligand>
        <name>Ca(2+)</name>
        <dbReference type="ChEBI" id="CHEBI:29108"/>
        <label>3</label>
    </ligand>
</feature>
<feature type="binding site" evidence="6">
    <location>
        <position position="468"/>
    </location>
    <ligand>
        <name>Ca(2+)</name>
        <dbReference type="ChEBI" id="CHEBI:29108"/>
        <label>3</label>
    </ligand>
</feature>
<feature type="binding site" evidence="6">
    <location>
        <position position="470"/>
    </location>
    <ligand>
        <name>Ca(2+)</name>
        <dbReference type="ChEBI" id="CHEBI:29108"/>
        <label>3</label>
    </ligand>
</feature>
<feature type="binding site" evidence="6">
    <location>
        <position position="475"/>
    </location>
    <ligand>
        <name>Ca(2+)</name>
        <dbReference type="ChEBI" id="CHEBI:29108"/>
        <label>3</label>
    </ligand>
</feature>
<feature type="binding site" evidence="6">
    <location>
        <position position="499"/>
    </location>
    <ligand>
        <name>Ca(2+)</name>
        <dbReference type="ChEBI" id="CHEBI:29108"/>
        <label>4</label>
    </ligand>
</feature>
<feature type="binding site" evidence="6">
    <location>
        <position position="501"/>
    </location>
    <ligand>
        <name>Ca(2+)</name>
        <dbReference type="ChEBI" id="CHEBI:29108"/>
        <label>4</label>
    </ligand>
</feature>
<feature type="binding site" evidence="6">
    <location>
        <position position="503"/>
    </location>
    <ligand>
        <name>Ca(2+)</name>
        <dbReference type="ChEBI" id="CHEBI:29108"/>
        <label>4</label>
    </ligand>
</feature>
<feature type="binding site" evidence="6">
    <location>
        <position position="505"/>
    </location>
    <ligand>
        <name>Ca(2+)</name>
        <dbReference type="ChEBI" id="CHEBI:29108"/>
        <label>4</label>
    </ligand>
</feature>
<feature type="binding site" evidence="6">
    <location>
        <position position="510"/>
    </location>
    <ligand>
        <name>Ca(2+)</name>
        <dbReference type="ChEBI" id="CHEBI:29108"/>
        <label>4</label>
    </ligand>
</feature>
<feature type="modified residue" description="Phosphoserine" evidence="3">
    <location>
        <position position="242"/>
    </location>
</feature>
<feature type="lipid moiety-binding region" description="N-myristoyl glycine" evidence="4">
    <location>
        <position position="2"/>
    </location>
</feature>
<feature type="sequence conflict" description="In Ref. 4; AAL38596/AAK96512." evidence="14" ref="4">
    <original>K</original>
    <variation>E</variation>
    <location>
        <position position="315"/>
    </location>
</feature>
<sequence length="529" mass="59336">MGHRHSKSKSSDPPPSSSSSSSGNVVHHVKPAGERRGSSGSGTVGSSGSGTGGSRSTTSTQQNGRILGRPMEEVRRTYEFGRELGRGQFGVTYLVTHKETKQQVACKSIPTRRLVHKDDIEDVRREVQIMHHLSGHRNIVDLKGAYEDRHSVNLIMELCEGGELFDRIISKGLYSERAAADLCRQMVMVVHSCHSMGVMHRDLKPENFLFLSKDENSPLKATDFGLSVFFKPGDKFKDLVGSAYYVAPEVLKRNYGPEADIWSAGVILYILLSGVPPFWGENETGIFDAILQGQLDFSADPWPALSDGAKDLVRKMLKYDPKDRLTAAEVLNHPWIREDGEASDKPLDNAVLSRMKQFRAMNKLKKMALKVIAENLSEEEIIGLKEMFKSLDTDNNGIVTLEELRTGLPKLGSKISEAEIRQLMEAADMDGDGSIDYLEFISATMHMNRIEREDHLYTAFQFFDNDNSGYITMEELELAMKKYNMGDDKSIKEIIAEVDTDRDGKINYEEFVAMMKKGNPELVPNRRRM</sequence>
<evidence type="ECO:0000250" key="1"/>
<evidence type="ECO:0000250" key="2">
    <source>
        <dbReference type="UniProtKB" id="Q06850"/>
    </source>
</evidence>
<evidence type="ECO:0000250" key="3">
    <source>
        <dbReference type="UniProtKB" id="Q9FKW4"/>
    </source>
</evidence>
<evidence type="ECO:0000255" key="4"/>
<evidence type="ECO:0000255" key="5">
    <source>
        <dbReference type="PROSITE-ProRule" id="PRU00159"/>
    </source>
</evidence>
<evidence type="ECO:0000255" key="6">
    <source>
        <dbReference type="PROSITE-ProRule" id="PRU00448"/>
    </source>
</evidence>
<evidence type="ECO:0000255" key="7">
    <source>
        <dbReference type="PROSITE-ProRule" id="PRU10027"/>
    </source>
</evidence>
<evidence type="ECO:0000256" key="8">
    <source>
        <dbReference type="SAM" id="MobiDB-lite"/>
    </source>
</evidence>
<evidence type="ECO:0000269" key="9">
    <source>
    </source>
</evidence>
<evidence type="ECO:0000269" key="10">
    <source>
    </source>
</evidence>
<evidence type="ECO:0000269" key="11">
    <source>
    </source>
</evidence>
<evidence type="ECO:0000303" key="12">
    <source>
    </source>
</evidence>
<evidence type="ECO:0000303" key="13">
    <source>
    </source>
</evidence>
<evidence type="ECO:0000305" key="14"/>
<evidence type="ECO:0000312" key="15">
    <source>
        <dbReference type="Araport" id="AT4G23650"/>
    </source>
</evidence>
<evidence type="ECO:0000312" key="16">
    <source>
        <dbReference type="EMBL" id="CAA23031.1"/>
    </source>
</evidence>
<gene>
    <name evidence="12" type="primary">CPK3</name>
    <name evidence="13" type="synonym">CDPK6</name>
    <name evidence="15" type="ordered locus">At4g23650</name>
    <name evidence="16" type="ORF">F9D16.120</name>
</gene>
<dbReference type="EC" id="2.7.11.1" evidence="5"/>
<dbReference type="EMBL" id="U20623">
    <property type="protein sequence ID" value="AAA67654.1"/>
    <property type="molecule type" value="mRNA"/>
</dbReference>
<dbReference type="EMBL" id="U20625">
    <property type="protein sequence ID" value="AAA67656.1"/>
    <property type="molecule type" value="Genomic_DNA"/>
</dbReference>
<dbReference type="EMBL" id="AL035394">
    <property type="protein sequence ID" value="CAA23031.1"/>
    <property type="molecule type" value="Genomic_DNA"/>
</dbReference>
<dbReference type="EMBL" id="AL161559">
    <property type="protein sequence ID" value="CAB79320.1"/>
    <property type="molecule type" value="Genomic_DNA"/>
</dbReference>
<dbReference type="EMBL" id="CP002687">
    <property type="protein sequence ID" value="AEE84789.1"/>
    <property type="molecule type" value="Genomic_DNA"/>
</dbReference>
<dbReference type="EMBL" id="AF385710">
    <property type="protein sequence ID" value="AAK60302.1"/>
    <property type="molecule type" value="mRNA"/>
</dbReference>
<dbReference type="EMBL" id="AF446863">
    <property type="protein sequence ID" value="AAL38596.1"/>
    <property type="molecule type" value="mRNA"/>
</dbReference>
<dbReference type="EMBL" id="AY052319">
    <property type="protein sequence ID" value="AAK96512.1"/>
    <property type="molecule type" value="mRNA"/>
</dbReference>
<dbReference type="EMBL" id="AY081732">
    <property type="protein sequence ID" value="AAL87385.1"/>
    <property type="molecule type" value="mRNA"/>
</dbReference>
<dbReference type="EMBL" id="BT000736">
    <property type="protein sequence ID" value="AAN31878.1"/>
    <property type="molecule type" value="mRNA"/>
</dbReference>
<dbReference type="EMBL" id="AY087637">
    <property type="protein sequence ID" value="AAM65176.1"/>
    <property type="molecule type" value="mRNA"/>
</dbReference>
<dbReference type="PIR" id="T05597">
    <property type="entry name" value="S71774"/>
</dbReference>
<dbReference type="RefSeq" id="NP_194096.1">
    <property type="nucleotide sequence ID" value="NM_118496.4"/>
</dbReference>
<dbReference type="SMR" id="Q42479"/>
<dbReference type="BioGRID" id="13754">
    <property type="interactions" value="36"/>
</dbReference>
<dbReference type="FunCoup" id="Q42479">
    <property type="interactions" value="2861"/>
</dbReference>
<dbReference type="IntAct" id="Q42479">
    <property type="interactions" value="18"/>
</dbReference>
<dbReference type="STRING" id="3702.Q42479"/>
<dbReference type="iPTMnet" id="Q42479"/>
<dbReference type="PaxDb" id="3702-AT4G23650.1"/>
<dbReference type="ProteomicsDB" id="220381"/>
<dbReference type="EnsemblPlants" id="AT4G23650.1">
    <property type="protein sequence ID" value="AT4G23650.1"/>
    <property type="gene ID" value="AT4G23650"/>
</dbReference>
<dbReference type="GeneID" id="828465"/>
<dbReference type="Gramene" id="AT4G23650.1">
    <property type="protein sequence ID" value="AT4G23650.1"/>
    <property type="gene ID" value="AT4G23650"/>
</dbReference>
<dbReference type="KEGG" id="ath:AT4G23650"/>
<dbReference type="Araport" id="AT4G23650"/>
<dbReference type="TAIR" id="AT4G23650">
    <property type="gene designation" value="CDPK6"/>
</dbReference>
<dbReference type="eggNOG" id="KOG0032">
    <property type="taxonomic scope" value="Eukaryota"/>
</dbReference>
<dbReference type="HOGENOM" id="CLU_000288_37_4_1"/>
<dbReference type="InParanoid" id="Q42479"/>
<dbReference type="OMA" id="TCVAYQL"/>
<dbReference type="OrthoDB" id="40902at2759"/>
<dbReference type="PhylomeDB" id="Q42479"/>
<dbReference type="CD-CODE" id="4299E36E">
    <property type="entry name" value="Nucleolus"/>
</dbReference>
<dbReference type="PRO" id="PR:Q42479"/>
<dbReference type="Proteomes" id="UP000006548">
    <property type="component" value="Chromosome 4"/>
</dbReference>
<dbReference type="ExpressionAtlas" id="Q42479">
    <property type="expression patterns" value="baseline and differential"/>
</dbReference>
<dbReference type="GO" id="GO:0005829">
    <property type="term" value="C:cytosol"/>
    <property type="evidence" value="ECO:0007005"/>
    <property type="project" value="TAIR"/>
</dbReference>
<dbReference type="GO" id="GO:0016020">
    <property type="term" value="C:membrane"/>
    <property type="evidence" value="ECO:0000314"/>
    <property type="project" value="TAIR"/>
</dbReference>
<dbReference type="GO" id="GO:0005634">
    <property type="term" value="C:nucleus"/>
    <property type="evidence" value="ECO:0007669"/>
    <property type="project" value="UniProtKB-SubCell"/>
</dbReference>
<dbReference type="GO" id="GO:0000325">
    <property type="term" value="C:plant-type vacuole"/>
    <property type="evidence" value="ECO:0007005"/>
    <property type="project" value="TAIR"/>
</dbReference>
<dbReference type="GO" id="GO:0005886">
    <property type="term" value="C:plasma membrane"/>
    <property type="evidence" value="ECO:0007005"/>
    <property type="project" value="TAIR"/>
</dbReference>
<dbReference type="GO" id="GO:0005524">
    <property type="term" value="F:ATP binding"/>
    <property type="evidence" value="ECO:0007669"/>
    <property type="project" value="UniProtKB-KW"/>
</dbReference>
<dbReference type="GO" id="GO:0005509">
    <property type="term" value="F:calcium ion binding"/>
    <property type="evidence" value="ECO:0007669"/>
    <property type="project" value="InterPro"/>
</dbReference>
<dbReference type="GO" id="GO:0004672">
    <property type="term" value="F:protein kinase activity"/>
    <property type="evidence" value="ECO:0000314"/>
    <property type="project" value="TAIR"/>
</dbReference>
<dbReference type="GO" id="GO:0106310">
    <property type="term" value="F:protein serine kinase activity"/>
    <property type="evidence" value="ECO:0007669"/>
    <property type="project" value="RHEA"/>
</dbReference>
<dbReference type="GO" id="GO:0004674">
    <property type="term" value="F:protein serine/threonine kinase activity"/>
    <property type="evidence" value="ECO:0007005"/>
    <property type="project" value="TAIR"/>
</dbReference>
<dbReference type="GO" id="GO:0009738">
    <property type="term" value="P:abscisic acid-activated signaling pathway"/>
    <property type="evidence" value="ECO:0000315"/>
    <property type="project" value="TAIR"/>
</dbReference>
<dbReference type="GO" id="GO:0046777">
    <property type="term" value="P:protein autophosphorylation"/>
    <property type="evidence" value="ECO:0007005"/>
    <property type="project" value="TAIR"/>
</dbReference>
<dbReference type="GO" id="GO:0010359">
    <property type="term" value="P:regulation of anion channel activity"/>
    <property type="evidence" value="ECO:0000315"/>
    <property type="project" value="TAIR"/>
</dbReference>
<dbReference type="GO" id="GO:0010119">
    <property type="term" value="P:regulation of stomatal movement"/>
    <property type="evidence" value="ECO:0000315"/>
    <property type="project" value="TAIR"/>
</dbReference>
<dbReference type="GO" id="GO:0009651">
    <property type="term" value="P:response to salt stress"/>
    <property type="evidence" value="ECO:0000315"/>
    <property type="project" value="TAIR"/>
</dbReference>
<dbReference type="CDD" id="cd00051">
    <property type="entry name" value="EFh"/>
    <property type="match status" value="2"/>
</dbReference>
<dbReference type="CDD" id="cd05117">
    <property type="entry name" value="STKc_CAMK"/>
    <property type="match status" value="1"/>
</dbReference>
<dbReference type="FunFam" id="1.10.238.10:FF:000015">
    <property type="entry name" value="Calcium-dependent protein kinase 1"/>
    <property type="match status" value="1"/>
</dbReference>
<dbReference type="FunFam" id="3.30.200.20:FF:000004">
    <property type="entry name" value="Calcium-dependent protein kinase 1"/>
    <property type="match status" value="1"/>
</dbReference>
<dbReference type="FunFam" id="1.10.510.10:FF:000056">
    <property type="entry name" value="calcium-dependent protein kinase 1"/>
    <property type="match status" value="1"/>
</dbReference>
<dbReference type="Gene3D" id="1.10.238.10">
    <property type="entry name" value="EF-hand"/>
    <property type="match status" value="1"/>
</dbReference>
<dbReference type="Gene3D" id="3.30.200.20">
    <property type="entry name" value="Phosphorylase Kinase, domain 1"/>
    <property type="match status" value="1"/>
</dbReference>
<dbReference type="Gene3D" id="1.10.510.10">
    <property type="entry name" value="Transferase(Phosphotransferase) domain 1"/>
    <property type="match status" value="1"/>
</dbReference>
<dbReference type="InterPro" id="IPR050205">
    <property type="entry name" value="CDPK_Ser/Thr_kinases"/>
</dbReference>
<dbReference type="InterPro" id="IPR011992">
    <property type="entry name" value="EF-hand-dom_pair"/>
</dbReference>
<dbReference type="InterPro" id="IPR018247">
    <property type="entry name" value="EF_Hand_1_Ca_BS"/>
</dbReference>
<dbReference type="InterPro" id="IPR002048">
    <property type="entry name" value="EF_hand_dom"/>
</dbReference>
<dbReference type="InterPro" id="IPR011009">
    <property type="entry name" value="Kinase-like_dom_sf"/>
</dbReference>
<dbReference type="InterPro" id="IPR000719">
    <property type="entry name" value="Prot_kinase_dom"/>
</dbReference>
<dbReference type="InterPro" id="IPR017441">
    <property type="entry name" value="Protein_kinase_ATP_BS"/>
</dbReference>
<dbReference type="InterPro" id="IPR008271">
    <property type="entry name" value="Ser/Thr_kinase_AS"/>
</dbReference>
<dbReference type="PANTHER" id="PTHR24349">
    <property type="entry name" value="SERINE/THREONINE-PROTEIN KINASE"/>
    <property type="match status" value="1"/>
</dbReference>
<dbReference type="Pfam" id="PF13499">
    <property type="entry name" value="EF-hand_7"/>
    <property type="match status" value="2"/>
</dbReference>
<dbReference type="Pfam" id="PF00069">
    <property type="entry name" value="Pkinase"/>
    <property type="match status" value="1"/>
</dbReference>
<dbReference type="SMART" id="SM00054">
    <property type="entry name" value="EFh"/>
    <property type="match status" value="4"/>
</dbReference>
<dbReference type="SMART" id="SM00220">
    <property type="entry name" value="S_TKc"/>
    <property type="match status" value="1"/>
</dbReference>
<dbReference type="SUPFAM" id="SSF47473">
    <property type="entry name" value="EF-hand"/>
    <property type="match status" value="1"/>
</dbReference>
<dbReference type="SUPFAM" id="SSF56112">
    <property type="entry name" value="Protein kinase-like (PK-like)"/>
    <property type="match status" value="1"/>
</dbReference>
<dbReference type="PROSITE" id="PS00018">
    <property type="entry name" value="EF_HAND_1"/>
    <property type="match status" value="4"/>
</dbReference>
<dbReference type="PROSITE" id="PS50222">
    <property type="entry name" value="EF_HAND_2"/>
    <property type="match status" value="4"/>
</dbReference>
<dbReference type="PROSITE" id="PS00107">
    <property type="entry name" value="PROTEIN_KINASE_ATP"/>
    <property type="match status" value="1"/>
</dbReference>
<dbReference type="PROSITE" id="PS50011">
    <property type="entry name" value="PROTEIN_KINASE_DOM"/>
    <property type="match status" value="1"/>
</dbReference>
<dbReference type="PROSITE" id="PS00108">
    <property type="entry name" value="PROTEIN_KINASE_ST"/>
    <property type="match status" value="1"/>
</dbReference>
<reference key="1">
    <citation type="journal article" date="1996" name="Plant Mol. Biol.">
        <title>Expression of three members of the calcium-dependent protein kinase gene family in Arabidopsis thaliana.</title>
        <authorList>
            <person name="Hong Y."/>
            <person name="Takano M."/>
            <person name="Liu C.-M."/>
            <person name="Gasch A."/>
            <person name="Chye M.-L."/>
            <person name="Chua N.-H."/>
        </authorList>
    </citation>
    <scope>NUCLEOTIDE SEQUENCE [GENOMIC DNA / MRNA]</scope>
    <source>
        <strain>cv. Columbia</strain>
    </source>
</reference>
<reference key="2">
    <citation type="journal article" date="1999" name="Nature">
        <title>Sequence and analysis of chromosome 4 of the plant Arabidopsis thaliana.</title>
        <authorList>
            <person name="Mayer K.F.X."/>
            <person name="Schueller C."/>
            <person name="Wambutt R."/>
            <person name="Murphy G."/>
            <person name="Volckaert G."/>
            <person name="Pohl T."/>
            <person name="Duesterhoeft A."/>
            <person name="Stiekema W."/>
            <person name="Entian K.-D."/>
            <person name="Terryn N."/>
            <person name="Harris B."/>
            <person name="Ansorge W."/>
            <person name="Brandt P."/>
            <person name="Grivell L.A."/>
            <person name="Rieger M."/>
            <person name="Weichselgartner M."/>
            <person name="de Simone V."/>
            <person name="Obermaier B."/>
            <person name="Mache R."/>
            <person name="Mueller M."/>
            <person name="Kreis M."/>
            <person name="Delseny M."/>
            <person name="Puigdomenech P."/>
            <person name="Watson M."/>
            <person name="Schmidtheini T."/>
            <person name="Reichert B."/>
            <person name="Portetelle D."/>
            <person name="Perez-Alonso M."/>
            <person name="Boutry M."/>
            <person name="Bancroft I."/>
            <person name="Vos P."/>
            <person name="Hoheisel J."/>
            <person name="Zimmermann W."/>
            <person name="Wedler H."/>
            <person name="Ridley P."/>
            <person name="Langham S.-A."/>
            <person name="McCullagh B."/>
            <person name="Bilham L."/>
            <person name="Robben J."/>
            <person name="van der Schueren J."/>
            <person name="Grymonprez B."/>
            <person name="Chuang Y.-J."/>
            <person name="Vandenbussche F."/>
            <person name="Braeken M."/>
            <person name="Weltjens I."/>
            <person name="Voet M."/>
            <person name="Bastiaens I."/>
            <person name="Aert R."/>
            <person name="Defoor E."/>
            <person name="Weitzenegger T."/>
            <person name="Bothe G."/>
            <person name="Ramsperger U."/>
            <person name="Hilbert H."/>
            <person name="Braun M."/>
            <person name="Holzer E."/>
            <person name="Brandt A."/>
            <person name="Peters S."/>
            <person name="van Staveren M."/>
            <person name="Dirkse W."/>
            <person name="Mooijman P."/>
            <person name="Klein Lankhorst R."/>
            <person name="Rose M."/>
            <person name="Hauf J."/>
            <person name="Koetter P."/>
            <person name="Berneiser S."/>
            <person name="Hempel S."/>
            <person name="Feldpausch M."/>
            <person name="Lamberth S."/>
            <person name="Van den Daele H."/>
            <person name="De Keyser A."/>
            <person name="Buysshaert C."/>
            <person name="Gielen J."/>
            <person name="Villarroel R."/>
            <person name="De Clercq R."/>
            <person name="van Montagu M."/>
            <person name="Rogers J."/>
            <person name="Cronin A."/>
            <person name="Quail M.A."/>
            <person name="Bray-Allen S."/>
            <person name="Clark L."/>
            <person name="Doggett J."/>
            <person name="Hall S."/>
            <person name="Kay M."/>
            <person name="Lennard N."/>
            <person name="McLay K."/>
            <person name="Mayes R."/>
            <person name="Pettett A."/>
            <person name="Rajandream M.A."/>
            <person name="Lyne M."/>
            <person name="Benes V."/>
            <person name="Rechmann S."/>
            <person name="Borkova D."/>
            <person name="Bloecker H."/>
            <person name="Scharfe M."/>
            <person name="Grimm M."/>
            <person name="Loehnert T.-H."/>
            <person name="Dose S."/>
            <person name="de Haan M."/>
            <person name="Maarse A.C."/>
            <person name="Schaefer M."/>
            <person name="Mueller-Auer S."/>
            <person name="Gabel C."/>
            <person name="Fuchs M."/>
            <person name="Fartmann B."/>
            <person name="Granderath K."/>
            <person name="Dauner D."/>
            <person name="Herzl A."/>
            <person name="Neumann S."/>
            <person name="Argiriou A."/>
            <person name="Vitale D."/>
            <person name="Liguori R."/>
            <person name="Piravandi E."/>
            <person name="Massenet O."/>
            <person name="Quigley F."/>
            <person name="Clabauld G."/>
            <person name="Muendlein A."/>
            <person name="Felber R."/>
            <person name="Schnabl S."/>
            <person name="Hiller R."/>
            <person name="Schmidt W."/>
            <person name="Lecharny A."/>
            <person name="Aubourg S."/>
            <person name="Chefdor F."/>
            <person name="Cooke R."/>
            <person name="Berger C."/>
            <person name="Monfort A."/>
            <person name="Casacuberta E."/>
            <person name="Gibbons T."/>
            <person name="Weber N."/>
            <person name="Vandenbol M."/>
            <person name="Bargues M."/>
            <person name="Terol J."/>
            <person name="Torres A."/>
            <person name="Perez-Perez A."/>
            <person name="Purnelle B."/>
            <person name="Bent E."/>
            <person name="Johnson S."/>
            <person name="Tacon D."/>
            <person name="Jesse T."/>
            <person name="Heijnen L."/>
            <person name="Schwarz S."/>
            <person name="Scholler P."/>
            <person name="Heber S."/>
            <person name="Francs P."/>
            <person name="Bielke C."/>
            <person name="Frishman D."/>
            <person name="Haase D."/>
            <person name="Lemcke K."/>
            <person name="Mewes H.-W."/>
            <person name="Stocker S."/>
            <person name="Zaccaria P."/>
            <person name="Bevan M."/>
            <person name="Wilson R.K."/>
            <person name="de la Bastide M."/>
            <person name="Habermann K."/>
            <person name="Parnell L."/>
            <person name="Dedhia N."/>
            <person name="Gnoj L."/>
            <person name="Schutz K."/>
            <person name="Huang E."/>
            <person name="Spiegel L."/>
            <person name="Sekhon M."/>
            <person name="Murray J."/>
            <person name="Sheet P."/>
            <person name="Cordes M."/>
            <person name="Abu-Threideh J."/>
            <person name="Stoneking T."/>
            <person name="Kalicki J."/>
            <person name="Graves T."/>
            <person name="Harmon G."/>
            <person name="Edwards J."/>
            <person name="Latreille P."/>
            <person name="Courtney L."/>
            <person name="Cloud J."/>
            <person name="Abbott A."/>
            <person name="Scott K."/>
            <person name="Johnson D."/>
            <person name="Minx P."/>
            <person name="Bentley D."/>
            <person name="Fulton B."/>
            <person name="Miller N."/>
            <person name="Greco T."/>
            <person name="Kemp K."/>
            <person name="Kramer J."/>
            <person name="Fulton L."/>
            <person name="Mardis E."/>
            <person name="Dante M."/>
            <person name="Pepin K."/>
            <person name="Hillier L.W."/>
            <person name="Nelson J."/>
            <person name="Spieth J."/>
            <person name="Ryan E."/>
            <person name="Andrews S."/>
            <person name="Geisel C."/>
            <person name="Layman D."/>
            <person name="Du H."/>
            <person name="Ali J."/>
            <person name="Berghoff A."/>
            <person name="Jones K."/>
            <person name="Drone K."/>
            <person name="Cotton M."/>
            <person name="Joshu C."/>
            <person name="Antonoiu B."/>
            <person name="Zidanic M."/>
            <person name="Strong C."/>
            <person name="Sun H."/>
            <person name="Lamar B."/>
            <person name="Yordan C."/>
            <person name="Ma P."/>
            <person name="Zhong J."/>
            <person name="Preston R."/>
            <person name="Vil D."/>
            <person name="Shekher M."/>
            <person name="Matero A."/>
            <person name="Shah R."/>
            <person name="Swaby I.K."/>
            <person name="O'Shaughnessy A."/>
            <person name="Rodriguez M."/>
            <person name="Hoffman J."/>
            <person name="Till S."/>
            <person name="Granat S."/>
            <person name="Shohdy N."/>
            <person name="Hasegawa A."/>
            <person name="Hameed A."/>
            <person name="Lodhi M."/>
            <person name="Johnson A."/>
            <person name="Chen E."/>
            <person name="Marra M.A."/>
            <person name="Martienssen R."/>
            <person name="McCombie W.R."/>
        </authorList>
    </citation>
    <scope>NUCLEOTIDE SEQUENCE [LARGE SCALE GENOMIC DNA]</scope>
    <source>
        <strain>cv. Columbia</strain>
    </source>
</reference>
<reference key="3">
    <citation type="journal article" date="2017" name="Plant J.">
        <title>Araport11: a complete reannotation of the Arabidopsis thaliana reference genome.</title>
        <authorList>
            <person name="Cheng C.Y."/>
            <person name="Krishnakumar V."/>
            <person name="Chan A.P."/>
            <person name="Thibaud-Nissen F."/>
            <person name="Schobel S."/>
            <person name="Town C.D."/>
        </authorList>
    </citation>
    <scope>GENOME REANNOTATION</scope>
    <source>
        <strain>cv. Columbia</strain>
    </source>
</reference>
<reference key="4">
    <citation type="journal article" date="2003" name="Science">
        <title>Empirical analysis of transcriptional activity in the Arabidopsis genome.</title>
        <authorList>
            <person name="Yamada K."/>
            <person name="Lim J."/>
            <person name="Dale J.M."/>
            <person name="Chen H."/>
            <person name="Shinn P."/>
            <person name="Palm C.J."/>
            <person name="Southwick A.M."/>
            <person name="Wu H.C."/>
            <person name="Kim C.J."/>
            <person name="Nguyen M."/>
            <person name="Pham P.K."/>
            <person name="Cheuk R.F."/>
            <person name="Karlin-Newmann G."/>
            <person name="Liu S.X."/>
            <person name="Lam B."/>
            <person name="Sakano H."/>
            <person name="Wu T."/>
            <person name="Yu G."/>
            <person name="Miranda M."/>
            <person name="Quach H.L."/>
            <person name="Tripp M."/>
            <person name="Chang C.H."/>
            <person name="Lee J.M."/>
            <person name="Toriumi M.J."/>
            <person name="Chan M.M."/>
            <person name="Tang C.C."/>
            <person name="Onodera C.S."/>
            <person name="Deng J.M."/>
            <person name="Akiyama K."/>
            <person name="Ansari Y."/>
            <person name="Arakawa T."/>
            <person name="Banh J."/>
            <person name="Banno F."/>
            <person name="Bowser L."/>
            <person name="Brooks S.Y."/>
            <person name="Carninci P."/>
            <person name="Chao Q."/>
            <person name="Choy N."/>
            <person name="Enju A."/>
            <person name="Goldsmith A.D."/>
            <person name="Gurjal M."/>
            <person name="Hansen N.F."/>
            <person name="Hayashizaki Y."/>
            <person name="Johnson-Hopson C."/>
            <person name="Hsuan V.W."/>
            <person name="Iida K."/>
            <person name="Karnes M."/>
            <person name="Khan S."/>
            <person name="Koesema E."/>
            <person name="Ishida J."/>
            <person name="Jiang P.X."/>
            <person name="Jones T."/>
            <person name="Kawai J."/>
            <person name="Kamiya A."/>
            <person name="Meyers C."/>
            <person name="Nakajima M."/>
            <person name="Narusaka M."/>
            <person name="Seki M."/>
            <person name="Sakurai T."/>
            <person name="Satou M."/>
            <person name="Tamse R."/>
            <person name="Vaysberg M."/>
            <person name="Wallender E.K."/>
            <person name="Wong C."/>
            <person name="Yamamura Y."/>
            <person name="Yuan S."/>
            <person name="Shinozaki K."/>
            <person name="Davis R.W."/>
            <person name="Theologis A."/>
            <person name="Ecker J.R."/>
        </authorList>
    </citation>
    <scope>NUCLEOTIDE SEQUENCE [LARGE SCALE MRNA]</scope>
    <source>
        <strain>cv. Columbia</strain>
    </source>
</reference>
<reference key="5">
    <citation type="submission" date="2002-03" db="EMBL/GenBank/DDBJ databases">
        <title>Full-length cDNA from Arabidopsis thaliana.</title>
        <authorList>
            <person name="Brover V.V."/>
            <person name="Troukhan M.E."/>
            <person name="Alexandrov N.A."/>
            <person name="Lu Y.-P."/>
            <person name="Flavell R.B."/>
            <person name="Feldmann K.A."/>
        </authorList>
    </citation>
    <scope>NUCLEOTIDE SEQUENCE [LARGE SCALE MRNA]</scope>
</reference>
<reference key="6">
    <citation type="journal article" date="2001" name="New Phytol.">
        <title>The CDPK superfamily of protein kinases.</title>
        <authorList>
            <person name="Harmon A.C."/>
            <person name="Gribskov M."/>
            <person name="Gubrium E."/>
            <person name="Harper J.F."/>
        </authorList>
    </citation>
    <scope>GENE FAMILY</scope>
    <scope>NOMENCLATURE</scope>
</reference>
<reference key="7">
    <citation type="journal article" date="2002" name="Plant Physiol.">
        <title>Calcium signaling through protein kinases. The Arabidopsis calcium-dependent protein kinase gene family.</title>
        <authorList>
            <person name="Cheng S.-H."/>
            <person name="Willmann M.R."/>
            <person name="Chen H.-C."/>
            <person name="Sheen J."/>
        </authorList>
    </citation>
    <scope>GENE FAMILY</scope>
    <scope>NOMENCLATURE</scope>
</reference>
<reference key="8">
    <citation type="journal article" date="2003" name="Plant Physiol.">
        <title>The Arabidopsis CDPK-SnRK superfamily of protein kinases.</title>
        <authorList>
            <person name="Hrabak E.M."/>
            <person name="Chan C.W.M."/>
            <person name="Gribskov M."/>
            <person name="Harper J.F."/>
            <person name="Choi J.H."/>
            <person name="Halford N."/>
            <person name="Kudla J."/>
            <person name="Luan S."/>
            <person name="Nimmo H.G."/>
            <person name="Sussman M.R."/>
            <person name="Thomas M."/>
            <person name="Walker-Simmons K."/>
            <person name="Zhu J.-K."/>
            <person name="Harmon A.C."/>
        </authorList>
    </citation>
    <scope>GENE FAMILY</scope>
    <scope>NOMENCLATURE</scope>
</reference>
<reference key="9">
    <citation type="journal article" date="2003" name="Plant Physiol.">
        <title>Subcellular targeting of nine calcium-dependent protein kinase isoforms from Arabidopsis.</title>
        <authorList>
            <person name="Dammann C."/>
            <person name="Ichida A."/>
            <person name="Hong B."/>
            <person name="Romanowsky S.M."/>
            <person name="Hrabak E.M."/>
            <person name="Harmon A.C."/>
            <person name="Pickard B.G."/>
            <person name="Harper J.F."/>
        </authorList>
    </citation>
    <scope>SUBCELLULAR LOCATION</scope>
</reference>
<reference key="10">
    <citation type="journal article" date="2006" name="PLoS Biol.">
        <title>CDPKs CPK6 and CPK3 function in ABA regulation of guard cell S-type anion- and Ca(2+)-permeable channels and stomatal closure.</title>
        <authorList>
            <person name="Mori I.C."/>
            <person name="Murata Y."/>
            <person name="Yang Y."/>
            <person name="Munemasa S."/>
            <person name="Wang Y.-F."/>
            <person name="Andreoli S."/>
            <person name="Tiriac H."/>
            <person name="Alonso J.M."/>
            <person name="Harper J.F."/>
            <person name="Ecker J.R."/>
            <person name="Kwak J.M."/>
            <person name="Schroeder J.I."/>
        </authorList>
    </citation>
    <scope>FUNCTION</scope>
    <scope>TISSUE SPECIFICITY</scope>
</reference>
<reference key="11">
    <citation type="journal article" date="2009" name="Plant Physiol.">
        <title>Large-scale Arabidopsis phosphoproteome profiling reveals novel chloroplast kinase substrates and phosphorylation networks.</title>
        <authorList>
            <person name="Reiland S."/>
            <person name="Messerli G."/>
            <person name="Baerenfaller K."/>
            <person name="Gerrits B."/>
            <person name="Endler A."/>
            <person name="Grossmann J."/>
            <person name="Gruissem W."/>
            <person name="Baginsky S."/>
        </authorList>
    </citation>
    <scope>IDENTIFICATION BY MASS SPECTROMETRY [LARGE SCALE ANALYSIS]</scope>
</reference>
<reference key="12">
    <citation type="journal article" date="2018" name="Plant Cell">
        <title>The receptor-like pseudokinase GHR1 is required for stomatal closure.</title>
        <authorList>
            <person name="Sierla M."/>
            <person name="Horak H."/>
            <person name="Overmyer K."/>
            <person name="Waszczak C."/>
            <person name="Yarmolinsky D."/>
            <person name="Maierhofer T."/>
            <person name="Vainonen J.P."/>
            <person name="Denessiouk K."/>
            <person name="Salojaervi J."/>
            <person name="Laanemets K."/>
            <person name="Toldsepp K."/>
            <person name="Vahisalu T."/>
            <person name="Gauthier A."/>
            <person name="Puukko T."/>
            <person name="Paulin L."/>
            <person name="Auvinen P."/>
            <person name="Geiger D."/>
            <person name="Hedrich R."/>
            <person name="Kollist H."/>
            <person name="Kangasjaervi J."/>
        </authorList>
    </citation>
    <scope>INTERACTION WITH GHR1</scope>
    <source>
        <strain>cv. Columbia</strain>
        <strain>cv. Columbia GL1</strain>
    </source>
</reference>
<organism>
    <name type="scientific">Arabidopsis thaliana</name>
    <name type="common">Mouse-ear cress</name>
    <dbReference type="NCBI Taxonomy" id="3702"/>
    <lineage>
        <taxon>Eukaryota</taxon>
        <taxon>Viridiplantae</taxon>
        <taxon>Streptophyta</taxon>
        <taxon>Embryophyta</taxon>
        <taxon>Tracheophyta</taxon>
        <taxon>Spermatophyta</taxon>
        <taxon>Magnoliopsida</taxon>
        <taxon>eudicotyledons</taxon>
        <taxon>Gunneridae</taxon>
        <taxon>Pentapetalae</taxon>
        <taxon>rosids</taxon>
        <taxon>malvids</taxon>
        <taxon>Brassicales</taxon>
        <taxon>Brassicaceae</taxon>
        <taxon>Camelineae</taxon>
        <taxon>Arabidopsis</taxon>
    </lineage>
</organism>
<comment type="function">
    <text evidence="10">May play a role in signal transduction pathways that involve calcium as a second messenger. Functions in abscisic acid (ABA) regulation of guard cell S-type anion- and Ca(2+)-permeable channels and stomatal closure.</text>
</comment>
<comment type="catalytic activity">
    <reaction evidence="5">
        <text>L-seryl-[protein] + ATP = O-phospho-L-seryl-[protein] + ADP + H(+)</text>
        <dbReference type="Rhea" id="RHEA:17989"/>
        <dbReference type="Rhea" id="RHEA-COMP:9863"/>
        <dbReference type="Rhea" id="RHEA-COMP:11604"/>
        <dbReference type="ChEBI" id="CHEBI:15378"/>
        <dbReference type="ChEBI" id="CHEBI:29999"/>
        <dbReference type="ChEBI" id="CHEBI:30616"/>
        <dbReference type="ChEBI" id="CHEBI:83421"/>
        <dbReference type="ChEBI" id="CHEBI:456216"/>
        <dbReference type="EC" id="2.7.11.1"/>
    </reaction>
</comment>
<comment type="catalytic activity">
    <reaction evidence="5">
        <text>L-threonyl-[protein] + ATP = O-phospho-L-threonyl-[protein] + ADP + H(+)</text>
        <dbReference type="Rhea" id="RHEA:46608"/>
        <dbReference type="Rhea" id="RHEA-COMP:11060"/>
        <dbReference type="Rhea" id="RHEA-COMP:11605"/>
        <dbReference type="ChEBI" id="CHEBI:15378"/>
        <dbReference type="ChEBI" id="CHEBI:30013"/>
        <dbReference type="ChEBI" id="CHEBI:30616"/>
        <dbReference type="ChEBI" id="CHEBI:61977"/>
        <dbReference type="ChEBI" id="CHEBI:456216"/>
        <dbReference type="EC" id="2.7.11.1"/>
    </reaction>
</comment>
<comment type="activity regulation">
    <text evidence="1">Activated by calcium. Autophosphorylation may play an important role in the regulation of the kinase activity (By similarity).</text>
</comment>
<comment type="subunit">
    <text evidence="11">Interacts with GHR1.</text>
</comment>
<comment type="interaction">
    <interactant intactId="EBI-1235782">
        <id>Q42479</id>
    </interactant>
    <interactant intactId="EBI-1236097">
        <id>Q03509</id>
        <label>CAM6</label>
    </interactant>
    <organismsDiffer>false</organismsDiffer>
    <experiments>2</experiments>
</comment>
<comment type="interaction">
    <interactant intactId="EBI-1235782">
        <id>Q42479</id>
    </interactant>
    <interactant intactId="EBI-1236031">
        <id>P59220</id>
        <label>CAM7</label>
    </interactant>
    <organismsDiffer>false</organismsDiffer>
    <experiments>2</experiments>
</comment>
<comment type="subcellular location">
    <subcellularLocation>
        <location evidence="9">Cytoplasm</location>
    </subcellularLocation>
    <subcellularLocation>
        <location evidence="9">Nucleus</location>
    </subcellularLocation>
</comment>
<comment type="tissue specificity">
    <text evidence="10">Expressed in both guard cells and mesophyll cells.</text>
</comment>
<comment type="domain">
    <text evidence="1">There are 3 contiguous domains conserved in the CDPK subfamily: a kinase domain, an autoinhibitory (junction) domain and a calmodulin-like domain. The autoinhibitory domain (342-372) inactivates kinase activity under calcium-free conditions (By similarity).</text>
</comment>
<comment type="similarity">
    <text evidence="5">Belongs to the protein kinase superfamily. Ser/Thr protein kinase family. CDPK subfamily.</text>
</comment>
<accession>Q42479</accession>
<accession>Q941A2</accession>
<name>CDPK3_ARATH</name>
<protein>
    <recommendedName>
        <fullName evidence="12">Calcium-dependent protein kinase 3</fullName>
        <ecNumber evidence="5">2.7.11.1</ecNumber>
    </recommendedName>
    <alternativeName>
        <fullName evidence="13">Calcium-dependent protein kinase isoform CDPK6</fullName>
        <shortName evidence="13">AtCDPK6</shortName>
    </alternativeName>
</protein>